<comment type="function">
    <text evidence="1">Catalyzes the attachment of serine to tRNA(Ser). Is also able to aminoacylate tRNA(Sec) with serine, to form the misacylated tRNA L-seryl-tRNA(Sec), which will be further converted into selenocysteinyl-tRNA(Sec) (By similarity).</text>
</comment>
<comment type="catalytic activity">
    <reaction>
        <text>tRNA(Ser) + L-serine + ATP = L-seryl-tRNA(Ser) + AMP + diphosphate + H(+)</text>
        <dbReference type="Rhea" id="RHEA:12292"/>
        <dbReference type="Rhea" id="RHEA-COMP:9669"/>
        <dbReference type="Rhea" id="RHEA-COMP:9703"/>
        <dbReference type="ChEBI" id="CHEBI:15378"/>
        <dbReference type="ChEBI" id="CHEBI:30616"/>
        <dbReference type="ChEBI" id="CHEBI:33019"/>
        <dbReference type="ChEBI" id="CHEBI:33384"/>
        <dbReference type="ChEBI" id="CHEBI:78442"/>
        <dbReference type="ChEBI" id="CHEBI:78533"/>
        <dbReference type="ChEBI" id="CHEBI:456215"/>
        <dbReference type="EC" id="6.1.1.11"/>
    </reaction>
</comment>
<comment type="catalytic activity">
    <reaction>
        <text>tRNA(Sec) + L-serine + ATP = L-seryl-tRNA(Sec) + AMP + diphosphate + H(+)</text>
        <dbReference type="Rhea" id="RHEA:42580"/>
        <dbReference type="Rhea" id="RHEA-COMP:9742"/>
        <dbReference type="Rhea" id="RHEA-COMP:10128"/>
        <dbReference type="ChEBI" id="CHEBI:15378"/>
        <dbReference type="ChEBI" id="CHEBI:30616"/>
        <dbReference type="ChEBI" id="CHEBI:33019"/>
        <dbReference type="ChEBI" id="CHEBI:33384"/>
        <dbReference type="ChEBI" id="CHEBI:78442"/>
        <dbReference type="ChEBI" id="CHEBI:78533"/>
        <dbReference type="ChEBI" id="CHEBI:456215"/>
        <dbReference type="EC" id="6.1.1.11"/>
    </reaction>
</comment>
<comment type="pathway">
    <text>Aminoacyl-tRNA biosynthesis; selenocysteinyl-tRNA(Sec) biosynthesis; L-seryl-tRNA(Sec) from L-serine and tRNA(Sec): step 1/1.</text>
</comment>
<comment type="subunit">
    <text evidence="1">Homodimer. The tRNA molecule binds across the dimer (By similarity).</text>
</comment>
<comment type="domain">
    <text evidence="1">Consists of two distinct domains, a catalytic core and a N-terminal extension that is involved in tRNA binding.</text>
</comment>
<comment type="similarity">
    <text evidence="2">Belongs to the class-II aminoacyl-tRNA synthetase family. Type-1 seryl-tRNA synthetase subfamily.</text>
</comment>
<name>SYS_HELAN</name>
<feature type="chain" id="PRO_0000122196" description="Serine--tRNA ligase">
    <location>
        <begin position="1"/>
        <end position="438"/>
    </location>
</feature>
<feature type="binding site" evidence="1">
    <location>
        <begin position="235"/>
        <end position="237"/>
    </location>
    <ligand>
        <name>L-serine</name>
        <dbReference type="ChEBI" id="CHEBI:33384"/>
    </ligand>
</feature>
<feature type="binding site" evidence="1">
    <location>
        <begin position="266"/>
        <end position="268"/>
    </location>
    <ligand>
        <name>ATP</name>
        <dbReference type="ChEBI" id="CHEBI:30616"/>
    </ligand>
</feature>
<feature type="binding site" evidence="1">
    <location>
        <position position="282"/>
    </location>
    <ligand>
        <name>ATP</name>
        <dbReference type="ChEBI" id="CHEBI:30616"/>
    </ligand>
</feature>
<feature type="binding site" evidence="1">
    <location>
        <position position="289"/>
    </location>
    <ligand>
        <name>L-serine</name>
        <dbReference type="ChEBI" id="CHEBI:33384"/>
    </ligand>
</feature>
<feature type="binding site" evidence="1">
    <location>
        <begin position="355"/>
        <end position="358"/>
    </location>
    <ligand>
        <name>ATP</name>
        <dbReference type="ChEBI" id="CHEBI:30616"/>
    </ligand>
</feature>
<feature type="binding site" evidence="1">
    <location>
        <position position="393"/>
    </location>
    <ligand>
        <name>L-serine</name>
        <dbReference type="ChEBI" id="CHEBI:33384"/>
    </ligand>
</feature>
<dbReference type="EC" id="6.1.1.11"/>
<dbReference type="EMBL" id="Z98761">
    <property type="protein sequence ID" value="CAB11470.1"/>
    <property type="molecule type" value="mRNA"/>
</dbReference>
<dbReference type="PIR" id="T31430">
    <property type="entry name" value="T31430"/>
</dbReference>
<dbReference type="RefSeq" id="NP_001413464.1">
    <property type="nucleotide sequence ID" value="NM_001426535.1"/>
</dbReference>
<dbReference type="SMR" id="O81983"/>
<dbReference type="EnsemblPlants" id="mRNA:HanXRQr2_Chr04g0145711">
    <property type="protein sequence ID" value="mRNA:HanXRQr2_Chr04g0145711"/>
    <property type="gene ID" value="HanXRQr2_Chr04g0145711"/>
</dbReference>
<dbReference type="GeneID" id="110935850"/>
<dbReference type="Gramene" id="mRNA:HanXRQr2_Chr04g0145711">
    <property type="protein sequence ID" value="mRNA:HanXRQr2_Chr04g0145711"/>
    <property type="gene ID" value="HanXRQr2_Chr04g0145711"/>
</dbReference>
<dbReference type="OMA" id="GYTPCFR"/>
<dbReference type="OrthoDB" id="10264585at2759"/>
<dbReference type="UniPathway" id="UPA00906">
    <property type="reaction ID" value="UER00895"/>
</dbReference>
<dbReference type="GO" id="GO:0005524">
    <property type="term" value="F:ATP binding"/>
    <property type="evidence" value="ECO:0007669"/>
    <property type="project" value="UniProtKB-KW"/>
</dbReference>
<dbReference type="GO" id="GO:0004828">
    <property type="term" value="F:serine-tRNA ligase activity"/>
    <property type="evidence" value="ECO:0007669"/>
    <property type="project" value="UniProtKB-EC"/>
</dbReference>
<dbReference type="GO" id="GO:0006434">
    <property type="term" value="P:seryl-tRNA aminoacylation"/>
    <property type="evidence" value="ECO:0007669"/>
    <property type="project" value="InterPro"/>
</dbReference>
<dbReference type="CDD" id="cd00770">
    <property type="entry name" value="SerRS_core"/>
    <property type="match status" value="1"/>
</dbReference>
<dbReference type="FunFam" id="1.10.287.40:FF:000003">
    <property type="entry name" value="Serine--tRNA ligase cytoplasmic"/>
    <property type="match status" value="1"/>
</dbReference>
<dbReference type="FunFam" id="3.30.930.10:FF:000026">
    <property type="entry name" value="Seryl-tRNA synthetase, cytoplasmic"/>
    <property type="match status" value="1"/>
</dbReference>
<dbReference type="Gene3D" id="3.30.930.10">
    <property type="entry name" value="Bira Bifunctional Protein, Domain 2"/>
    <property type="match status" value="1"/>
</dbReference>
<dbReference type="Gene3D" id="1.10.287.40">
    <property type="entry name" value="Serine-tRNA synthetase, tRNA binding domain"/>
    <property type="match status" value="1"/>
</dbReference>
<dbReference type="InterPro" id="IPR002314">
    <property type="entry name" value="aa-tRNA-synt_IIb"/>
</dbReference>
<dbReference type="InterPro" id="IPR006195">
    <property type="entry name" value="aa-tRNA-synth_II"/>
</dbReference>
<dbReference type="InterPro" id="IPR045864">
    <property type="entry name" value="aa-tRNA-synth_II/BPL/LPL"/>
</dbReference>
<dbReference type="InterPro" id="IPR002317">
    <property type="entry name" value="Ser-tRNA-ligase_type_1"/>
</dbReference>
<dbReference type="InterPro" id="IPR015866">
    <property type="entry name" value="Ser-tRNA-synth_1_N"/>
</dbReference>
<dbReference type="InterPro" id="IPR042103">
    <property type="entry name" value="SerRS_1_N_sf"/>
</dbReference>
<dbReference type="InterPro" id="IPR033729">
    <property type="entry name" value="SerRS_core"/>
</dbReference>
<dbReference type="InterPro" id="IPR010978">
    <property type="entry name" value="tRNA-bd_arm"/>
</dbReference>
<dbReference type="NCBIfam" id="TIGR00414">
    <property type="entry name" value="serS"/>
    <property type="match status" value="1"/>
</dbReference>
<dbReference type="PANTHER" id="PTHR11778">
    <property type="entry name" value="SERYL-TRNA SYNTHETASE"/>
    <property type="match status" value="1"/>
</dbReference>
<dbReference type="Pfam" id="PF02403">
    <property type="entry name" value="Seryl_tRNA_N"/>
    <property type="match status" value="1"/>
</dbReference>
<dbReference type="Pfam" id="PF00587">
    <property type="entry name" value="tRNA-synt_2b"/>
    <property type="match status" value="1"/>
</dbReference>
<dbReference type="PIRSF" id="PIRSF001529">
    <property type="entry name" value="Ser-tRNA-synth_IIa"/>
    <property type="match status" value="1"/>
</dbReference>
<dbReference type="PRINTS" id="PR00981">
    <property type="entry name" value="TRNASYNTHSER"/>
</dbReference>
<dbReference type="SUPFAM" id="SSF55681">
    <property type="entry name" value="Class II aaRS and biotin synthetases"/>
    <property type="match status" value="1"/>
</dbReference>
<dbReference type="SUPFAM" id="SSF46589">
    <property type="entry name" value="tRNA-binding arm"/>
    <property type="match status" value="1"/>
</dbReference>
<dbReference type="PROSITE" id="PS50862">
    <property type="entry name" value="AA_TRNA_LIGASE_II"/>
    <property type="match status" value="1"/>
</dbReference>
<sequence>MLDINLFREEKGGNPEIVRESQRRRGASVEIVDEIIKLDKEWRQRQFELEQLRKDFNRINKEVAKLRISGGDASSLIKNTEENKDSTAKKQAEVQEARTALYSKLETVGNLVHDSVPVSNDEADNAVVRTWGERREETNLKNHVELVELLGIADLKKGANVAGGRGYYLKGDGVRLNQALINFGLDFLEKRKYTALQTPFFMRKDIMGKCAQLAQFDEELYKVTGEGDDKYLIATAEQPLCAYHIDDWIHPNELPLRYAGYSSCFRKEAGSHGRDTLGIFRVHQFEKVEQFCLTKPSGNDSWEMHEEMIKNSEEFYQMLKLPYQVVSIVSGALNDAAAKKYDLEAWFPASKTYRELVSCSNCTDYQSRKLEIRCGQKKGNEQAKQYCHLLNSTLTATERTLCCILENYQTEKGVAIPEVLQPFMGGKTFLDFLKKIKK</sequence>
<protein>
    <recommendedName>
        <fullName>Serine--tRNA ligase</fullName>
        <ecNumber>6.1.1.11</ecNumber>
    </recommendedName>
    <alternativeName>
        <fullName>Seryl-tRNA synthetase</fullName>
        <shortName>SerRS</shortName>
    </alternativeName>
    <alternativeName>
        <fullName>Seryl-tRNA(Ser/Sec) synthetase</fullName>
    </alternativeName>
</protein>
<organism>
    <name type="scientific">Helianthus annuus</name>
    <name type="common">Common sunflower</name>
    <dbReference type="NCBI Taxonomy" id="4232"/>
    <lineage>
        <taxon>Eukaryota</taxon>
        <taxon>Viridiplantae</taxon>
        <taxon>Streptophyta</taxon>
        <taxon>Embryophyta</taxon>
        <taxon>Tracheophyta</taxon>
        <taxon>Spermatophyta</taxon>
        <taxon>Magnoliopsida</taxon>
        <taxon>eudicotyledons</taxon>
        <taxon>Gunneridae</taxon>
        <taxon>Pentapetalae</taxon>
        <taxon>asterids</taxon>
        <taxon>campanulids</taxon>
        <taxon>Asterales</taxon>
        <taxon>Asteraceae</taxon>
        <taxon>Asteroideae</taxon>
        <taxon>Heliantheae alliance</taxon>
        <taxon>Heliantheae</taxon>
        <taxon>Helianthus</taxon>
    </lineage>
</organism>
<proteinExistence type="evidence at transcript level"/>
<accession>O81983</accession>
<keyword id="KW-0030">Aminoacyl-tRNA synthetase</keyword>
<keyword id="KW-0067">ATP-binding</keyword>
<keyword id="KW-0436">Ligase</keyword>
<keyword id="KW-0547">Nucleotide-binding</keyword>
<keyword id="KW-0648">Protein biosynthesis</keyword>
<evidence type="ECO:0000250" key="1"/>
<evidence type="ECO:0000305" key="2"/>
<reference key="1">
    <citation type="submission" date="1997-08" db="EMBL/GenBank/DDBJ databases">
        <authorList>
            <person name="Peeters N.M."/>
            <person name="Small I.D."/>
        </authorList>
    </citation>
    <scope>NUCLEOTIDE SEQUENCE [MRNA]</scope>
    <source>
        <tissue>Etiolated seedling</tissue>
    </source>
</reference>